<protein>
    <recommendedName>
        <fullName>Ribose-5-phosphate isomerase</fullName>
        <ecNumber>5.3.1.6</ecNumber>
    </recommendedName>
    <alternativeName>
        <fullName>D-ribose-5-phosphate ketol-isomerase</fullName>
    </alternativeName>
    <alternativeName>
        <fullName>Phosphoriboisomerase</fullName>
    </alternativeName>
</protein>
<reference key="1">
    <citation type="journal article" date="2009" name="Nature">
        <title>Evolution of pathogenicity and sexual reproduction in eight Candida genomes.</title>
        <authorList>
            <person name="Butler G."/>
            <person name="Rasmussen M.D."/>
            <person name="Lin M.F."/>
            <person name="Santos M.A.S."/>
            <person name="Sakthikumar S."/>
            <person name="Munro C.A."/>
            <person name="Rheinbay E."/>
            <person name="Grabherr M."/>
            <person name="Forche A."/>
            <person name="Reedy J.L."/>
            <person name="Agrafioti I."/>
            <person name="Arnaud M.B."/>
            <person name="Bates S."/>
            <person name="Brown A.J.P."/>
            <person name="Brunke S."/>
            <person name="Costanzo M.C."/>
            <person name="Fitzpatrick D.A."/>
            <person name="de Groot P.W.J."/>
            <person name="Harris D."/>
            <person name="Hoyer L.L."/>
            <person name="Hube B."/>
            <person name="Klis F.M."/>
            <person name="Kodira C."/>
            <person name="Lennard N."/>
            <person name="Logue M.E."/>
            <person name="Martin R."/>
            <person name="Neiman A.M."/>
            <person name="Nikolaou E."/>
            <person name="Quail M.A."/>
            <person name="Quinn J."/>
            <person name="Santos M.C."/>
            <person name="Schmitzberger F.F."/>
            <person name="Sherlock G."/>
            <person name="Shah P."/>
            <person name="Silverstein K.A.T."/>
            <person name="Skrzypek M.S."/>
            <person name="Soll D."/>
            <person name="Staggs R."/>
            <person name="Stansfield I."/>
            <person name="Stumpf M.P.H."/>
            <person name="Sudbery P.E."/>
            <person name="Srikantha T."/>
            <person name="Zeng Q."/>
            <person name="Berman J."/>
            <person name="Berriman M."/>
            <person name="Heitman J."/>
            <person name="Gow N.A.R."/>
            <person name="Lorenz M.C."/>
            <person name="Birren B.W."/>
            <person name="Kellis M."/>
            <person name="Cuomo C.A."/>
        </authorList>
    </citation>
    <scope>NUCLEOTIDE SEQUENCE [LARGE SCALE GENOMIC DNA]</scope>
    <source>
        <strain>ATCC 11503 / BCRC 21390 / CBS 2605 / JCM 1781 / NBRC 1676 / NRRL YB-4239</strain>
    </source>
</reference>
<comment type="catalytic activity">
    <reaction>
        <text>aldehydo-D-ribose 5-phosphate = D-ribulose 5-phosphate</text>
        <dbReference type="Rhea" id="RHEA:14657"/>
        <dbReference type="ChEBI" id="CHEBI:58121"/>
        <dbReference type="ChEBI" id="CHEBI:58273"/>
        <dbReference type="EC" id="5.3.1.6"/>
    </reaction>
</comment>
<comment type="pathway">
    <text>Carbohydrate degradation; pentose phosphate pathway; D-ribose 5-phosphate from D-ribulose 5-phosphate (non-oxidative stage): step 1/1.</text>
</comment>
<comment type="subcellular location">
    <subcellularLocation>
        <location evidence="1">Cytoplasm</location>
    </subcellularLocation>
</comment>
<comment type="similarity">
    <text evidence="1">Belongs to the ribose 5-phosphate isomerase family.</text>
</comment>
<keyword id="KW-0963">Cytoplasm</keyword>
<keyword id="KW-0413">Isomerase</keyword>
<keyword id="KW-1185">Reference proteome</keyword>
<organism>
    <name type="scientific">Lodderomyces elongisporus (strain ATCC 11503 / CBS 2605 / JCM 1781 / NBRC 1676 / NRRL YB-4239)</name>
    <name type="common">Yeast</name>
    <name type="synonym">Saccharomyces elongisporus</name>
    <dbReference type="NCBI Taxonomy" id="379508"/>
    <lineage>
        <taxon>Eukaryota</taxon>
        <taxon>Fungi</taxon>
        <taxon>Dikarya</taxon>
        <taxon>Ascomycota</taxon>
        <taxon>Saccharomycotina</taxon>
        <taxon>Pichiomycetes</taxon>
        <taxon>Debaryomycetaceae</taxon>
        <taxon>Candida/Lodderomyces clade</taxon>
        <taxon>Lodderomyces</taxon>
    </lineage>
</organism>
<name>RPIA_LODEL</name>
<gene>
    <name type="primary">RKI1</name>
    <name type="ORF">LELG_02193</name>
</gene>
<proteinExistence type="inferred from homology"/>
<dbReference type="EC" id="5.3.1.6"/>
<dbReference type="EMBL" id="CH981525">
    <property type="protein sequence ID" value="EDK44014.1"/>
    <property type="molecule type" value="Genomic_DNA"/>
</dbReference>
<dbReference type="RefSeq" id="XP_001527364.1">
    <property type="nucleotide sequence ID" value="XM_001527314.1"/>
</dbReference>
<dbReference type="SMR" id="A5DXV6"/>
<dbReference type="FunCoup" id="A5DXV6">
    <property type="interactions" value="885"/>
</dbReference>
<dbReference type="STRING" id="379508.A5DXV6"/>
<dbReference type="GeneID" id="5234425"/>
<dbReference type="KEGG" id="lel:PVL30_002219"/>
<dbReference type="VEuPathDB" id="FungiDB:LELG_02193"/>
<dbReference type="eggNOG" id="KOG3075">
    <property type="taxonomic scope" value="Eukaryota"/>
</dbReference>
<dbReference type="HOGENOM" id="CLU_056590_0_0_1"/>
<dbReference type="InParanoid" id="A5DXV6"/>
<dbReference type="OMA" id="ACHVQEK"/>
<dbReference type="OrthoDB" id="1555531at2759"/>
<dbReference type="UniPathway" id="UPA00115">
    <property type="reaction ID" value="UER00412"/>
</dbReference>
<dbReference type="Proteomes" id="UP000001996">
    <property type="component" value="Unassembled WGS sequence"/>
</dbReference>
<dbReference type="GO" id="GO:0005737">
    <property type="term" value="C:cytoplasm"/>
    <property type="evidence" value="ECO:0007669"/>
    <property type="project" value="UniProtKB-SubCell"/>
</dbReference>
<dbReference type="GO" id="GO:0004751">
    <property type="term" value="F:ribose-5-phosphate isomerase activity"/>
    <property type="evidence" value="ECO:0007669"/>
    <property type="project" value="UniProtKB-EC"/>
</dbReference>
<dbReference type="GO" id="GO:0006014">
    <property type="term" value="P:D-ribose metabolic process"/>
    <property type="evidence" value="ECO:0007669"/>
    <property type="project" value="TreeGrafter"/>
</dbReference>
<dbReference type="GO" id="GO:0009052">
    <property type="term" value="P:pentose-phosphate shunt, non-oxidative branch"/>
    <property type="evidence" value="ECO:0007669"/>
    <property type="project" value="InterPro"/>
</dbReference>
<dbReference type="GO" id="GO:0008615">
    <property type="term" value="P:pyridoxine biosynthetic process"/>
    <property type="evidence" value="ECO:0007669"/>
    <property type="project" value="EnsemblFungi"/>
</dbReference>
<dbReference type="CDD" id="cd01398">
    <property type="entry name" value="RPI_A"/>
    <property type="match status" value="1"/>
</dbReference>
<dbReference type="FunFam" id="3.40.50.1360:FF:000014">
    <property type="entry name" value="Ribose 5-phosphate isomerase"/>
    <property type="match status" value="1"/>
</dbReference>
<dbReference type="FunFam" id="3.30.70.260:FF:000053">
    <property type="entry name" value="Ribose-5-phosphate isomerase, putative"/>
    <property type="match status" value="1"/>
</dbReference>
<dbReference type="Gene3D" id="3.30.70.260">
    <property type="match status" value="1"/>
</dbReference>
<dbReference type="Gene3D" id="3.40.50.1360">
    <property type="match status" value="1"/>
</dbReference>
<dbReference type="InterPro" id="IPR037171">
    <property type="entry name" value="NagB/RpiA_transferase-like"/>
</dbReference>
<dbReference type="InterPro" id="IPR004788">
    <property type="entry name" value="Ribose5P_isomerase_type_A"/>
</dbReference>
<dbReference type="NCBIfam" id="NF001924">
    <property type="entry name" value="PRK00702.1"/>
    <property type="match status" value="1"/>
</dbReference>
<dbReference type="NCBIfam" id="TIGR00021">
    <property type="entry name" value="rpiA"/>
    <property type="match status" value="1"/>
</dbReference>
<dbReference type="PANTHER" id="PTHR11934">
    <property type="entry name" value="RIBOSE-5-PHOSPHATE ISOMERASE"/>
    <property type="match status" value="1"/>
</dbReference>
<dbReference type="PANTHER" id="PTHR11934:SF0">
    <property type="entry name" value="RIBOSE-5-PHOSPHATE ISOMERASE"/>
    <property type="match status" value="1"/>
</dbReference>
<dbReference type="Pfam" id="PF06026">
    <property type="entry name" value="Rib_5-P_isom_A"/>
    <property type="match status" value="1"/>
</dbReference>
<dbReference type="SUPFAM" id="SSF75445">
    <property type="entry name" value="D-ribose-5-phosphate isomerase (RpiA), lid domain"/>
    <property type="match status" value="1"/>
</dbReference>
<dbReference type="SUPFAM" id="SSF100950">
    <property type="entry name" value="NagB/RpiA/CoA transferase-like"/>
    <property type="match status" value="1"/>
</dbReference>
<sequence length="284" mass="30972">MLFHRILPQYKTAISTYLTPTHCRLYIANLVTSRRMTNIEAAKKLAAYRAVDENLPPHAKVIGIGSGSTVVYVAERIGQLPNKDDFVCISTGFQSKQLIIDNGLKLGQIEQHPSIDIAFDGADEVDPQLNLIKGGGACLFQEKLVASASDKLIIVADFRKQSKHLGQNWRQGVPIEVVPIAFTKLINDLKRLGAKSVDLRQGGKAKAGPVITDNNNFILDADFGIIEDPKSLHLQLKQLVGVVDTGLFTGITEKVYFGEESGEVTTWDGVVTGSTTEEVIAESK</sequence>
<feature type="chain" id="PRO_0000339889" description="Ribose-5-phosphate isomerase">
    <location>
        <begin position="1"/>
        <end position="284"/>
    </location>
</feature>
<evidence type="ECO:0000305" key="1"/>
<accession>A5DXV6</accession>